<evidence type="ECO:0000255" key="1">
    <source>
        <dbReference type="HAMAP-Rule" id="MF_00033"/>
    </source>
</evidence>
<accession>B8FT56</accession>
<keyword id="KW-0131">Cell cycle</keyword>
<keyword id="KW-0132">Cell division</keyword>
<keyword id="KW-1003">Cell membrane</keyword>
<keyword id="KW-0133">Cell shape</keyword>
<keyword id="KW-0961">Cell wall biogenesis/degradation</keyword>
<keyword id="KW-0328">Glycosyltransferase</keyword>
<keyword id="KW-0472">Membrane</keyword>
<keyword id="KW-0573">Peptidoglycan synthesis</keyword>
<keyword id="KW-0808">Transferase</keyword>
<name>MURG_DESHD</name>
<reference key="1">
    <citation type="journal article" date="2012" name="BMC Microbiol.">
        <title>Genome sequence of Desulfitobacterium hafniense DCB-2, a Gram-positive anaerobe capable of dehalogenation and metal reduction.</title>
        <authorList>
            <person name="Kim S.H."/>
            <person name="Harzman C."/>
            <person name="Davis J.K."/>
            <person name="Hutcheson R."/>
            <person name="Broderick J.B."/>
            <person name="Marsh T.L."/>
            <person name="Tiedje J.M."/>
        </authorList>
    </citation>
    <scope>NUCLEOTIDE SEQUENCE [LARGE SCALE GENOMIC DNA]</scope>
    <source>
        <strain>DSM 10664 / DCB-2</strain>
    </source>
</reference>
<organism>
    <name type="scientific">Desulfitobacterium hafniense (strain DSM 10664 / DCB-2)</name>
    <dbReference type="NCBI Taxonomy" id="272564"/>
    <lineage>
        <taxon>Bacteria</taxon>
        <taxon>Bacillati</taxon>
        <taxon>Bacillota</taxon>
        <taxon>Clostridia</taxon>
        <taxon>Eubacteriales</taxon>
        <taxon>Desulfitobacteriaceae</taxon>
        <taxon>Desulfitobacterium</taxon>
    </lineage>
</organism>
<protein>
    <recommendedName>
        <fullName evidence="1">UDP-N-acetylglucosamine--N-acetylmuramyl-(pentapeptide) pyrophosphoryl-undecaprenol N-acetylglucosamine transferase</fullName>
        <ecNumber evidence="1">2.4.1.227</ecNumber>
    </recommendedName>
    <alternativeName>
        <fullName evidence="1">Undecaprenyl-PP-MurNAc-pentapeptide-UDPGlcNAc GlcNAc transferase</fullName>
    </alternativeName>
</protein>
<gene>
    <name evidence="1" type="primary">murG</name>
    <name type="ordered locus">Dhaf_4063</name>
</gene>
<feature type="chain" id="PRO_1000192126" description="UDP-N-acetylglucosamine--N-acetylmuramyl-(pentapeptide) pyrophosphoryl-undecaprenol N-acetylglucosamine transferase">
    <location>
        <begin position="1"/>
        <end position="369"/>
    </location>
</feature>
<feature type="binding site" evidence="1">
    <location>
        <begin position="10"/>
        <end position="12"/>
    </location>
    <ligand>
        <name>UDP-N-acetyl-alpha-D-glucosamine</name>
        <dbReference type="ChEBI" id="CHEBI:57705"/>
    </ligand>
</feature>
<feature type="binding site" evidence="1">
    <location>
        <position position="124"/>
    </location>
    <ligand>
        <name>UDP-N-acetyl-alpha-D-glucosamine</name>
        <dbReference type="ChEBI" id="CHEBI:57705"/>
    </ligand>
</feature>
<feature type="binding site" evidence="1">
    <location>
        <position position="166"/>
    </location>
    <ligand>
        <name>UDP-N-acetyl-alpha-D-glucosamine</name>
        <dbReference type="ChEBI" id="CHEBI:57705"/>
    </ligand>
</feature>
<feature type="binding site" evidence="1">
    <location>
        <position position="196"/>
    </location>
    <ligand>
        <name>UDP-N-acetyl-alpha-D-glucosamine</name>
        <dbReference type="ChEBI" id="CHEBI:57705"/>
    </ligand>
</feature>
<feature type="binding site" evidence="1">
    <location>
        <position position="300"/>
    </location>
    <ligand>
        <name>UDP-N-acetyl-alpha-D-glucosamine</name>
        <dbReference type="ChEBI" id="CHEBI:57705"/>
    </ligand>
</feature>
<dbReference type="EC" id="2.4.1.227" evidence="1"/>
<dbReference type="EMBL" id="CP001336">
    <property type="protein sequence ID" value="ACL22072.1"/>
    <property type="molecule type" value="Genomic_DNA"/>
</dbReference>
<dbReference type="RefSeq" id="WP_015944994.1">
    <property type="nucleotide sequence ID" value="NC_011830.1"/>
</dbReference>
<dbReference type="SMR" id="B8FT56"/>
<dbReference type="CAZy" id="GT28">
    <property type="family name" value="Glycosyltransferase Family 28"/>
</dbReference>
<dbReference type="KEGG" id="dhd:Dhaf_4063"/>
<dbReference type="HOGENOM" id="CLU_037404_0_1_9"/>
<dbReference type="UniPathway" id="UPA00219"/>
<dbReference type="Proteomes" id="UP000007726">
    <property type="component" value="Chromosome"/>
</dbReference>
<dbReference type="GO" id="GO:0005886">
    <property type="term" value="C:plasma membrane"/>
    <property type="evidence" value="ECO:0007669"/>
    <property type="project" value="UniProtKB-SubCell"/>
</dbReference>
<dbReference type="GO" id="GO:0051991">
    <property type="term" value="F:UDP-N-acetyl-D-glucosamine:N-acetylmuramoyl-L-alanyl-D-glutamyl-meso-2,6-diaminopimelyl-D-alanyl-D-alanine-diphosphoundecaprenol 4-beta-N-acetylglucosaminlytransferase activity"/>
    <property type="evidence" value="ECO:0007669"/>
    <property type="project" value="RHEA"/>
</dbReference>
<dbReference type="GO" id="GO:0050511">
    <property type="term" value="F:undecaprenyldiphospho-muramoylpentapeptide beta-N-acetylglucosaminyltransferase activity"/>
    <property type="evidence" value="ECO:0007669"/>
    <property type="project" value="UniProtKB-UniRule"/>
</dbReference>
<dbReference type="GO" id="GO:0005975">
    <property type="term" value="P:carbohydrate metabolic process"/>
    <property type="evidence" value="ECO:0007669"/>
    <property type="project" value="InterPro"/>
</dbReference>
<dbReference type="GO" id="GO:0051301">
    <property type="term" value="P:cell division"/>
    <property type="evidence" value="ECO:0007669"/>
    <property type="project" value="UniProtKB-KW"/>
</dbReference>
<dbReference type="GO" id="GO:0071555">
    <property type="term" value="P:cell wall organization"/>
    <property type="evidence" value="ECO:0007669"/>
    <property type="project" value="UniProtKB-KW"/>
</dbReference>
<dbReference type="GO" id="GO:0030259">
    <property type="term" value="P:lipid glycosylation"/>
    <property type="evidence" value="ECO:0007669"/>
    <property type="project" value="UniProtKB-UniRule"/>
</dbReference>
<dbReference type="GO" id="GO:0009252">
    <property type="term" value="P:peptidoglycan biosynthetic process"/>
    <property type="evidence" value="ECO:0007669"/>
    <property type="project" value="UniProtKB-UniRule"/>
</dbReference>
<dbReference type="GO" id="GO:0008360">
    <property type="term" value="P:regulation of cell shape"/>
    <property type="evidence" value="ECO:0007669"/>
    <property type="project" value="UniProtKB-KW"/>
</dbReference>
<dbReference type="CDD" id="cd03785">
    <property type="entry name" value="GT28_MurG"/>
    <property type="match status" value="1"/>
</dbReference>
<dbReference type="Gene3D" id="3.40.50.2000">
    <property type="entry name" value="Glycogen Phosphorylase B"/>
    <property type="match status" value="2"/>
</dbReference>
<dbReference type="HAMAP" id="MF_00033">
    <property type="entry name" value="MurG"/>
    <property type="match status" value="1"/>
</dbReference>
<dbReference type="InterPro" id="IPR006009">
    <property type="entry name" value="GlcNAc_MurG"/>
</dbReference>
<dbReference type="InterPro" id="IPR007235">
    <property type="entry name" value="Glyco_trans_28_C"/>
</dbReference>
<dbReference type="InterPro" id="IPR004276">
    <property type="entry name" value="GlycoTrans_28_N"/>
</dbReference>
<dbReference type="NCBIfam" id="TIGR01133">
    <property type="entry name" value="murG"/>
    <property type="match status" value="1"/>
</dbReference>
<dbReference type="PANTHER" id="PTHR21015:SF22">
    <property type="entry name" value="GLYCOSYLTRANSFERASE"/>
    <property type="match status" value="1"/>
</dbReference>
<dbReference type="PANTHER" id="PTHR21015">
    <property type="entry name" value="UDP-N-ACETYLGLUCOSAMINE--N-ACETYLMURAMYL-(PENTAPEPTIDE) PYROPHOSPHORYL-UNDECAPRENOL N-ACETYLGLUCOSAMINE TRANSFERASE 1"/>
    <property type="match status" value="1"/>
</dbReference>
<dbReference type="Pfam" id="PF04101">
    <property type="entry name" value="Glyco_tran_28_C"/>
    <property type="match status" value="1"/>
</dbReference>
<dbReference type="Pfam" id="PF03033">
    <property type="entry name" value="Glyco_transf_28"/>
    <property type="match status" value="1"/>
</dbReference>
<dbReference type="SUPFAM" id="SSF53756">
    <property type="entry name" value="UDP-Glycosyltransferase/glycogen phosphorylase"/>
    <property type="match status" value="1"/>
</dbReference>
<sequence length="369" mass="39922">MRVIVTGGGTGGHIYPALAIAKGILVHQPDAEILYIGTREGMEARLVPEAGLEFAGVSGQGLPRKLSLETLKVGGKSFKALWETKQILKKFKPDLVVGTGGYVAGPVVLTAALFGIPTLLHEQNALPGITNKILTRFVRKVMVTFPESIAHFGVRRKLVLTGLPVRPEIGNISRERGAACLGLRSDCLTLLVTGGSRGARSINQAMPTVLKHLAGRKDIQVIWATGKATYQETLESLKTQGIQWQRENWRVLEYLKDMPEAMACADLFVGRAGATTLAEIMVAGKPGILIPYPLAAENHQEFNARALEKDGAACVILDKDLTGENLWALVQGLIEKPEKLRKMAQAARSLGQPDALNKIVKVCLDTAWK</sequence>
<comment type="function">
    <text evidence="1">Cell wall formation. Catalyzes the transfer of a GlcNAc subunit on undecaprenyl-pyrophosphoryl-MurNAc-pentapeptide (lipid intermediate I) to form undecaprenyl-pyrophosphoryl-MurNAc-(pentapeptide)GlcNAc (lipid intermediate II).</text>
</comment>
<comment type="catalytic activity">
    <reaction evidence="1">
        <text>di-trans,octa-cis-undecaprenyl diphospho-N-acetyl-alpha-D-muramoyl-L-alanyl-D-glutamyl-meso-2,6-diaminopimeloyl-D-alanyl-D-alanine + UDP-N-acetyl-alpha-D-glucosamine = di-trans,octa-cis-undecaprenyl diphospho-[N-acetyl-alpha-D-glucosaminyl-(1-&gt;4)]-N-acetyl-alpha-D-muramoyl-L-alanyl-D-glutamyl-meso-2,6-diaminopimeloyl-D-alanyl-D-alanine + UDP + H(+)</text>
        <dbReference type="Rhea" id="RHEA:31227"/>
        <dbReference type="ChEBI" id="CHEBI:15378"/>
        <dbReference type="ChEBI" id="CHEBI:57705"/>
        <dbReference type="ChEBI" id="CHEBI:58223"/>
        <dbReference type="ChEBI" id="CHEBI:61387"/>
        <dbReference type="ChEBI" id="CHEBI:61388"/>
        <dbReference type="EC" id="2.4.1.227"/>
    </reaction>
</comment>
<comment type="pathway">
    <text evidence="1">Cell wall biogenesis; peptidoglycan biosynthesis.</text>
</comment>
<comment type="subcellular location">
    <subcellularLocation>
        <location evidence="1">Cell membrane</location>
        <topology evidence="1">Peripheral membrane protein</topology>
        <orientation evidence="1">Cytoplasmic side</orientation>
    </subcellularLocation>
</comment>
<comment type="similarity">
    <text evidence="1">Belongs to the glycosyltransferase 28 family. MurG subfamily.</text>
</comment>
<proteinExistence type="inferred from homology"/>